<sequence>MTEIVDIIAREILDSRGNPTVEVDVILEDGAFGRAAVPSGASTGAHEANEKRDGDKARYLGKGVQQAVDAVNGEIFDALSGVDAEDQRRVDNLMIELDGTPNKARLGANAILGVSLATAKAAAESAGLPLYKYVGGVNARVLPTPMMNIINGGAHADNPIDIQEFMILPTGAKDFREGLRMGAEIFHALKKALKDAGHNTNVGDEGGFAPNLASAEAALDFIVKAGEKAGYKAGDDFVLGLDVASTEFFKNGKYELEGEGKSLDPAAMVDYLAGLVAKFPILTIEDGMAEDDFDGWKLLTDTLGKKVQLVGDDLFVTNPKRLQMGLDKGLANSILVKVNQIGTLSETIDAVELAHRHGYTSVMSHRSGETEDSTIADLAVALNCGQIKTGSLARSDRTAKYNQLLRIQEMLDDQGVYAGRAALKGR</sequence>
<reference key="1">
    <citation type="journal article" date="2001" name="Proc. Natl. Acad. Sci. U.S.A.">
        <title>Complete genome sequence of Caulobacter crescentus.</title>
        <authorList>
            <person name="Nierman W.C."/>
            <person name="Feldblyum T.V."/>
            <person name="Laub M.T."/>
            <person name="Paulsen I.T."/>
            <person name="Nelson K.E."/>
            <person name="Eisen J.A."/>
            <person name="Heidelberg J.F."/>
            <person name="Alley M.R.K."/>
            <person name="Ohta N."/>
            <person name="Maddock J.R."/>
            <person name="Potocka I."/>
            <person name="Nelson W.C."/>
            <person name="Newton A."/>
            <person name="Stephens C."/>
            <person name="Phadke N.D."/>
            <person name="Ely B."/>
            <person name="DeBoy R.T."/>
            <person name="Dodson R.J."/>
            <person name="Durkin A.S."/>
            <person name="Gwinn M.L."/>
            <person name="Haft D.H."/>
            <person name="Kolonay J.F."/>
            <person name="Smit J."/>
            <person name="Craven M.B."/>
            <person name="Khouri H.M."/>
            <person name="Shetty J."/>
            <person name="Berry K.J."/>
            <person name="Utterback T.R."/>
            <person name="Tran K."/>
            <person name="Wolf A.M."/>
            <person name="Vamathevan J.J."/>
            <person name="Ermolaeva M.D."/>
            <person name="White O."/>
            <person name="Salzberg S.L."/>
            <person name="Venter J.C."/>
            <person name="Shapiro L."/>
            <person name="Fraser C.M."/>
        </authorList>
    </citation>
    <scope>NUCLEOTIDE SEQUENCE [LARGE SCALE GENOMIC DNA]</scope>
    <source>
        <strain>ATCC 19089 / CIP 103742 / CB 15</strain>
    </source>
</reference>
<accession>Q9A7J9</accession>
<feature type="chain" id="PRO_0000133864" description="Enolase">
    <location>
        <begin position="1"/>
        <end position="426"/>
    </location>
</feature>
<feature type="active site" description="Proton donor" evidence="1">
    <location>
        <position position="205"/>
    </location>
</feature>
<feature type="active site" description="Proton acceptor" evidence="1">
    <location>
        <position position="337"/>
    </location>
</feature>
<feature type="binding site" evidence="1">
    <location>
        <position position="163"/>
    </location>
    <ligand>
        <name>(2R)-2-phosphoglycerate</name>
        <dbReference type="ChEBI" id="CHEBI:58289"/>
    </ligand>
</feature>
<feature type="binding site" evidence="1">
    <location>
        <position position="242"/>
    </location>
    <ligand>
        <name>Mg(2+)</name>
        <dbReference type="ChEBI" id="CHEBI:18420"/>
    </ligand>
</feature>
<feature type="binding site" evidence="1">
    <location>
        <position position="285"/>
    </location>
    <ligand>
        <name>Mg(2+)</name>
        <dbReference type="ChEBI" id="CHEBI:18420"/>
    </ligand>
</feature>
<feature type="binding site" evidence="1">
    <location>
        <position position="312"/>
    </location>
    <ligand>
        <name>Mg(2+)</name>
        <dbReference type="ChEBI" id="CHEBI:18420"/>
    </ligand>
</feature>
<feature type="binding site" evidence="1">
    <location>
        <position position="337"/>
    </location>
    <ligand>
        <name>(2R)-2-phosphoglycerate</name>
        <dbReference type="ChEBI" id="CHEBI:58289"/>
    </ligand>
</feature>
<feature type="binding site" evidence="1">
    <location>
        <position position="366"/>
    </location>
    <ligand>
        <name>(2R)-2-phosphoglycerate</name>
        <dbReference type="ChEBI" id="CHEBI:58289"/>
    </ligand>
</feature>
<feature type="binding site" evidence="1">
    <location>
        <position position="367"/>
    </location>
    <ligand>
        <name>(2R)-2-phosphoglycerate</name>
        <dbReference type="ChEBI" id="CHEBI:58289"/>
    </ligand>
</feature>
<feature type="binding site" evidence="1">
    <location>
        <position position="388"/>
    </location>
    <ligand>
        <name>(2R)-2-phosphoglycerate</name>
        <dbReference type="ChEBI" id="CHEBI:58289"/>
    </ligand>
</feature>
<protein>
    <recommendedName>
        <fullName evidence="1">Enolase</fullName>
        <ecNumber evidence="1">4.2.1.11</ecNumber>
    </recommendedName>
    <alternativeName>
        <fullName evidence="1">2-phospho-D-glycerate hydro-lyase</fullName>
    </alternativeName>
    <alternativeName>
        <fullName evidence="1">2-phosphoglycerate dehydratase</fullName>
    </alternativeName>
</protein>
<dbReference type="EC" id="4.2.1.11" evidence="1"/>
<dbReference type="EMBL" id="AE005673">
    <property type="protein sequence ID" value="AAK23700.1"/>
    <property type="molecule type" value="Genomic_DNA"/>
</dbReference>
<dbReference type="PIR" id="H87462">
    <property type="entry name" value="H87462"/>
</dbReference>
<dbReference type="RefSeq" id="NP_420532.1">
    <property type="nucleotide sequence ID" value="NC_002696.2"/>
</dbReference>
<dbReference type="RefSeq" id="WP_010919592.1">
    <property type="nucleotide sequence ID" value="NC_002696.2"/>
</dbReference>
<dbReference type="SMR" id="Q9A7J9"/>
<dbReference type="STRING" id="190650.CC_1724"/>
<dbReference type="EnsemblBacteria" id="AAK23700">
    <property type="protein sequence ID" value="AAK23700"/>
    <property type="gene ID" value="CC_1724"/>
</dbReference>
<dbReference type="KEGG" id="ccr:CC_1724"/>
<dbReference type="PATRIC" id="fig|190650.5.peg.1748"/>
<dbReference type="eggNOG" id="COG0148">
    <property type="taxonomic scope" value="Bacteria"/>
</dbReference>
<dbReference type="HOGENOM" id="CLU_031223_2_1_5"/>
<dbReference type="BioCyc" id="CAULO:CC1724-MONOMER"/>
<dbReference type="UniPathway" id="UPA00109">
    <property type="reaction ID" value="UER00187"/>
</dbReference>
<dbReference type="Proteomes" id="UP000001816">
    <property type="component" value="Chromosome"/>
</dbReference>
<dbReference type="GO" id="GO:0009986">
    <property type="term" value="C:cell surface"/>
    <property type="evidence" value="ECO:0007669"/>
    <property type="project" value="UniProtKB-SubCell"/>
</dbReference>
<dbReference type="GO" id="GO:0005576">
    <property type="term" value="C:extracellular region"/>
    <property type="evidence" value="ECO:0007669"/>
    <property type="project" value="UniProtKB-SubCell"/>
</dbReference>
<dbReference type="GO" id="GO:0000015">
    <property type="term" value="C:phosphopyruvate hydratase complex"/>
    <property type="evidence" value="ECO:0007669"/>
    <property type="project" value="InterPro"/>
</dbReference>
<dbReference type="GO" id="GO:0000287">
    <property type="term" value="F:magnesium ion binding"/>
    <property type="evidence" value="ECO:0007669"/>
    <property type="project" value="UniProtKB-UniRule"/>
</dbReference>
<dbReference type="GO" id="GO:0004634">
    <property type="term" value="F:phosphopyruvate hydratase activity"/>
    <property type="evidence" value="ECO:0007669"/>
    <property type="project" value="UniProtKB-UniRule"/>
</dbReference>
<dbReference type="GO" id="GO:0006096">
    <property type="term" value="P:glycolytic process"/>
    <property type="evidence" value="ECO:0007669"/>
    <property type="project" value="UniProtKB-UniRule"/>
</dbReference>
<dbReference type="CDD" id="cd03313">
    <property type="entry name" value="enolase"/>
    <property type="match status" value="1"/>
</dbReference>
<dbReference type="FunFam" id="3.20.20.120:FF:000001">
    <property type="entry name" value="Enolase"/>
    <property type="match status" value="1"/>
</dbReference>
<dbReference type="FunFam" id="3.30.390.10:FF:000001">
    <property type="entry name" value="Enolase"/>
    <property type="match status" value="1"/>
</dbReference>
<dbReference type="Gene3D" id="3.20.20.120">
    <property type="entry name" value="Enolase-like C-terminal domain"/>
    <property type="match status" value="1"/>
</dbReference>
<dbReference type="Gene3D" id="3.30.390.10">
    <property type="entry name" value="Enolase-like, N-terminal domain"/>
    <property type="match status" value="1"/>
</dbReference>
<dbReference type="HAMAP" id="MF_00318">
    <property type="entry name" value="Enolase"/>
    <property type="match status" value="1"/>
</dbReference>
<dbReference type="InterPro" id="IPR000941">
    <property type="entry name" value="Enolase"/>
</dbReference>
<dbReference type="InterPro" id="IPR036849">
    <property type="entry name" value="Enolase-like_C_sf"/>
</dbReference>
<dbReference type="InterPro" id="IPR029017">
    <property type="entry name" value="Enolase-like_N"/>
</dbReference>
<dbReference type="InterPro" id="IPR020810">
    <property type="entry name" value="Enolase_C"/>
</dbReference>
<dbReference type="InterPro" id="IPR020809">
    <property type="entry name" value="Enolase_CS"/>
</dbReference>
<dbReference type="InterPro" id="IPR020811">
    <property type="entry name" value="Enolase_N"/>
</dbReference>
<dbReference type="NCBIfam" id="TIGR01060">
    <property type="entry name" value="eno"/>
    <property type="match status" value="1"/>
</dbReference>
<dbReference type="PANTHER" id="PTHR11902">
    <property type="entry name" value="ENOLASE"/>
    <property type="match status" value="1"/>
</dbReference>
<dbReference type="PANTHER" id="PTHR11902:SF1">
    <property type="entry name" value="ENOLASE"/>
    <property type="match status" value="1"/>
</dbReference>
<dbReference type="Pfam" id="PF00113">
    <property type="entry name" value="Enolase_C"/>
    <property type="match status" value="1"/>
</dbReference>
<dbReference type="Pfam" id="PF03952">
    <property type="entry name" value="Enolase_N"/>
    <property type="match status" value="1"/>
</dbReference>
<dbReference type="PIRSF" id="PIRSF001400">
    <property type="entry name" value="Enolase"/>
    <property type="match status" value="1"/>
</dbReference>
<dbReference type="PRINTS" id="PR00148">
    <property type="entry name" value="ENOLASE"/>
</dbReference>
<dbReference type="SFLD" id="SFLDF00002">
    <property type="entry name" value="enolase"/>
    <property type="match status" value="1"/>
</dbReference>
<dbReference type="SFLD" id="SFLDG00178">
    <property type="entry name" value="enolase"/>
    <property type="match status" value="1"/>
</dbReference>
<dbReference type="SMART" id="SM01192">
    <property type="entry name" value="Enolase_C"/>
    <property type="match status" value="1"/>
</dbReference>
<dbReference type="SMART" id="SM01193">
    <property type="entry name" value="Enolase_N"/>
    <property type="match status" value="1"/>
</dbReference>
<dbReference type="SUPFAM" id="SSF51604">
    <property type="entry name" value="Enolase C-terminal domain-like"/>
    <property type="match status" value="1"/>
</dbReference>
<dbReference type="SUPFAM" id="SSF54826">
    <property type="entry name" value="Enolase N-terminal domain-like"/>
    <property type="match status" value="1"/>
</dbReference>
<dbReference type="PROSITE" id="PS00164">
    <property type="entry name" value="ENOLASE"/>
    <property type="match status" value="1"/>
</dbReference>
<proteinExistence type="inferred from homology"/>
<keyword id="KW-0963">Cytoplasm</keyword>
<keyword id="KW-0324">Glycolysis</keyword>
<keyword id="KW-0456">Lyase</keyword>
<keyword id="KW-0460">Magnesium</keyword>
<keyword id="KW-0479">Metal-binding</keyword>
<keyword id="KW-1185">Reference proteome</keyword>
<keyword id="KW-0964">Secreted</keyword>
<evidence type="ECO:0000255" key="1">
    <source>
        <dbReference type="HAMAP-Rule" id="MF_00318"/>
    </source>
</evidence>
<name>ENO_CAUVC</name>
<organism>
    <name type="scientific">Caulobacter vibrioides (strain ATCC 19089 / CIP 103742 / CB 15)</name>
    <name type="common">Caulobacter crescentus</name>
    <dbReference type="NCBI Taxonomy" id="190650"/>
    <lineage>
        <taxon>Bacteria</taxon>
        <taxon>Pseudomonadati</taxon>
        <taxon>Pseudomonadota</taxon>
        <taxon>Alphaproteobacteria</taxon>
        <taxon>Caulobacterales</taxon>
        <taxon>Caulobacteraceae</taxon>
        <taxon>Caulobacter</taxon>
    </lineage>
</organism>
<gene>
    <name evidence="1" type="primary">eno</name>
    <name type="ordered locus">CC_1724</name>
</gene>
<comment type="function">
    <text evidence="1">Catalyzes the reversible conversion of 2-phosphoglycerate (2-PG) into phosphoenolpyruvate (PEP). It is essential for the degradation of carbohydrates via glycolysis.</text>
</comment>
<comment type="catalytic activity">
    <reaction evidence="1">
        <text>(2R)-2-phosphoglycerate = phosphoenolpyruvate + H2O</text>
        <dbReference type="Rhea" id="RHEA:10164"/>
        <dbReference type="ChEBI" id="CHEBI:15377"/>
        <dbReference type="ChEBI" id="CHEBI:58289"/>
        <dbReference type="ChEBI" id="CHEBI:58702"/>
        <dbReference type="EC" id="4.2.1.11"/>
    </reaction>
</comment>
<comment type="cofactor">
    <cofactor evidence="1">
        <name>Mg(2+)</name>
        <dbReference type="ChEBI" id="CHEBI:18420"/>
    </cofactor>
    <text evidence="1">Binds a second Mg(2+) ion via substrate during catalysis.</text>
</comment>
<comment type="pathway">
    <text evidence="1">Carbohydrate degradation; glycolysis; pyruvate from D-glyceraldehyde 3-phosphate: step 4/5.</text>
</comment>
<comment type="subcellular location">
    <subcellularLocation>
        <location evidence="1">Cytoplasm</location>
    </subcellularLocation>
    <subcellularLocation>
        <location evidence="1">Secreted</location>
    </subcellularLocation>
    <subcellularLocation>
        <location evidence="1">Cell surface</location>
    </subcellularLocation>
    <text evidence="1">Fractions of enolase are present in both the cytoplasm and on the cell surface.</text>
</comment>
<comment type="similarity">
    <text evidence="1">Belongs to the enolase family.</text>
</comment>